<comment type="function">
    <text evidence="1 4">This venom insulin, from a fish-hunting cone snail, facilitates prey capture by rapidly inducing hypoglycemic shock (PubMed:30747102). It is one of the smallest known insulin found in nature and lacks the C-terminal segment of the B chain that, in human insulin, mediates engagement of the insulin receptor (INSR) and assembly of the hormone's hexameric storage form (By similarity). Despite lacking this segment, it both binds and activates human insulin receptor (long isoform (HIR-B)) with a high potency (EC(50)=242 nM) (PubMed:30747102). In vivo, intraperitoneal injection of this peptide into zebrafish lowers blood glucose with a lower potency than human insulin (PubMed:30747102). In addition, when applied to water, this peptide reduces overall locomotor activity of zebrafish larvae, observed as a significant decrease in the percentage of time spent swimming and movement frequency (By similarity). When tested on a mouse model of diabetes, this insulin also lowers blood glucose with a 10-fold lower potency than human insulin (By similarity).</text>
</comment>
<comment type="subunit">
    <text evidence="1">Heterodimer of A and B chains; disulfide-linked.</text>
</comment>
<comment type="subcellular location">
    <subcellularLocation>
        <location evidence="3">Secreted</location>
    </subcellularLocation>
</comment>
<comment type="tissue specificity">
    <text evidence="7">Expressed by the venom gland.</text>
</comment>
<comment type="PTM">
    <text evidence="3">It is noteworthy that in this dimer, in contrast to Con-Ins G1, the chain B is amidated and not the chain A.</text>
</comment>
<comment type="mass spectrometry" mass="4817.1" method="Electrospray" evidence="3">
    <text>without hydroxyPro and with 3 carboxyglutamate (residues 41, 98 and 109). The measured ranges are 30-51, 93-113.</text>
</comment>
<comment type="miscellaneous">
    <text evidence="7">Venom insulins constitute about 1/25 of the total venom of C.geographus.</text>
</comment>
<comment type="similarity">
    <text>Belongs to the insulin family.</text>
</comment>
<name>INS3A_CONGE</name>
<feature type="signal peptide" evidence="2">
    <location>
        <begin position="1"/>
        <end position="21"/>
    </location>
</feature>
<feature type="propeptide" id="PRO_0000439310" evidence="6">
    <location>
        <begin position="22"/>
        <end position="29"/>
    </location>
</feature>
<feature type="peptide" id="PRO_5002112025" description="Con-Ins G3 B chain" evidence="3">
    <location>
        <begin position="30"/>
        <end position="51"/>
    </location>
</feature>
<feature type="propeptide" id="PRO_0000439311" description="C peptide" evidence="3">
    <location>
        <begin position="52"/>
        <end position="92"/>
    </location>
</feature>
<feature type="peptide" id="PRO_0000439312" description="Con-Ins G3 A chain" evidence="3">
    <location>
        <begin position="93"/>
        <end position="113"/>
    </location>
</feature>
<feature type="modified residue" description="4-hydroxyproline; partial" evidence="1">
    <location>
        <position position="34"/>
    </location>
</feature>
<feature type="modified residue" description="4-carboxyglutamate" evidence="1">
    <location>
        <position position="41"/>
    </location>
</feature>
<feature type="modified residue" description="Histidine amide" evidence="3 4">
    <location>
        <position position="51"/>
    </location>
</feature>
<feature type="modified residue" description="4-carboxyglutamate" evidence="3 4">
    <location>
        <position position="96"/>
    </location>
</feature>
<feature type="modified residue" description="4-hydroxyproline; partial" evidence="1">
    <location>
        <position position="102"/>
    </location>
</feature>
<feature type="disulfide bond" description="Interchain (between B and A chains)" evidence="1">
    <location>
        <begin position="38"/>
        <end position="99"/>
    </location>
</feature>
<feature type="disulfide bond" description="Interchain (between B and A chains)" evidence="1">
    <location>
        <begin position="50"/>
        <end position="112"/>
    </location>
</feature>
<feature type="disulfide bond" evidence="1">
    <location>
        <begin position="98"/>
        <end position="103"/>
    </location>
</feature>
<sequence length="113" mass="12817">MTTSFYFLLVALGLLLYVCQSSFGNQHTRNSDTPKHRCGSELADQYVQLCHGKRNDAGKKRGRASPLWQRQGFLSMLKAKRNEAFFLQRDGRGIVEVCCDNPCTVATLRTFCH</sequence>
<reference key="1">
    <citation type="journal article" date="2015" name="Proc. Natl. Acad. Sci. U.S.A.">
        <title>Specialized insulin is used for chemical warfare by fish-hunting cone snails.</title>
        <authorList>
            <person name="Safavi-Hemami H."/>
            <person name="Gajewiak J."/>
            <person name="Karanth S."/>
            <person name="Robinson S.D."/>
            <person name="Ueberheide B."/>
            <person name="Douglass A.D."/>
            <person name="Schlegel A."/>
            <person name="Imperial J.S."/>
            <person name="Watkins M."/>
            <person name="Bandyopadhyay P.K."/>
            <person name="Yandell M."/>
            <person name="Li Q."/>
            <person name="Purcell A.W."/>
            <person name="Norton R.S."/>
            <person name="Ellgaard L."/>
            <person name="Olivera B.M."/>
        </authorList>
    </citation>
    <scope>NUCLEOTIDE SEQUENCE [MRNA]</scope>
    <scope>PROTEIN SEQUENCE OF 30-51 AND 93-113</scope>
    <scope>MASS SPECTROMETRY</scope>
    <scope>AMIDATION AT HIS-51</scope>
    <scope>GAMMA-CARBOXYGLUTAMATION AT GLU-96</scope>
    <scope>SUBCELLULAR LOCATION</scope>
    <scope>TISSUE SPECIFICITY</scope>
    <source>
        <tissue>Venom</tissue>
        <tissue>Venom gland</tissue>
    </source>
</reference>
<reference key="2">
    <citation type="journal article" date="2019" name="Elife">
        <title>Fish-hunting cone snail venoms are a rich source of minimized ligands of the vertebrate insulin receptor.</title>
        <authorList>
            <person name="Ahorukomeye P."/>
            <person name="Disotuar M.M."/>
            <person name="Gajewiak J."/>
            <person name="Karanth S."/>
            <person name="Watkins M."/>
            <person name="Robinson S.D."/>
            <person name="Florez Salcedo P."/>
            <person name="Smith N.A."/>
            <person name="Smith B.J."/>
            <person name="Schlegel A."/>
            <person name="Forbes B.E."/>
            <person name="Olivera B."/>
            <person name="Hung-Chieh Chou D."/>
            <person name="Safavi-Hemami H."/>
        </authorList>
    </citation>
    <scope>FUNCTION</scope>
    <scope>SYNTHESIS OF 30-51 AND 93-113</scope>
</reference>
<accession>A0A0B5A8P4</accession>
<dbReference type="EMBL" id="KP268616">
    <property type="protein sequence ID" value="AJD85820.1"/>
    <property type="molecule type" value="mRNA"/>
</dbReference>
<dbReference type="GO" id="GO:0005576">
    <property type="term" value="C:extracellular region"/>
    <property type="evidence" value="ECO:0007669"/>
    <property type="project" value="UniProtKB-SubCell"/>
</dbReference>
<dbReference type="GO" id="GO:0005179">
    <property type="term" value="F:hormone activity"/>
    <property type="evidence" value="ECO:0007669"/>
    <property type="project" value="UniProtKB-KW"/>
</dbReference>
<dbReference type="GO" id="GO:0090729">
    <property type="term" value="F:toxin activity"/>
    <property type="evidence" value="ECO:0007669"/>
    <property type="project" value="UniProtKB-KW"/>
</dbReference>
<dbReference type="GO" id="GO:0006006">
    <property type="term" value="P:glucose metabolic process"/>
    <property type="evidence" value="ECO:0007669"/>
    <property type="project" value="UniProtKB-KW"/>
</dbReference>
<dbReference type="Gene3D" id="1.10.100.10">
    <property type="entry name" value="Insulin-like"/>
    <property type="match status" value="1"/>
</dbReference>
<dbReference type="InterPro" id="IPR016179">
    <property type="entry name" value="Insulin-like"/>
</dbReference>
<dbReference type="InterPro" id="IPR036438">
    <property type="entry name" value="Insulin-like_sf"/>
</dbReference>
<dbReference type="InterPro" id="IPR022353">
    <property type="entry name" value="Insulin_CS"/>
</dbReference>
<dbReference type="InterPro" id="IPR022352">
    <property type="entry name" value="Insulin_family"/>
</dbReference>
<dbReference type="Pfam" id="PF00049">
    <property type="entry name" value="Insulin"/>
    <property type="match status" value="1"/>
</dbReference>
<dbReference type="PRINTS" id="PR00276">
    <property type="entry name" value="INSULINFAMLY"/>
</dbReference>
<dbReference type="SMART" id="SM00078">
    <property type="entry name" value="IlGF"/>
    <property type="match status" value="1"/>
</dbReference>
<dbReference type="SUPFAM" id="SSF56994">
    <property type="entry name" value="Insulin-like"/>
    <property type="match status" value="1"/>
</dbReference>
<dbReference type="PROSITE" id="PS00262">
    <property type="entry name" value="INSULIN"/>
    <property type="match status" value="1"/>
</dbReference>
<keyword id="KW-0027">Amidation</keyword>
<keyword id="KW-0119">Carbohydrate metabolism</keyword>
<keyword id="KW-0165">Cleavage on pair of basic residues</keyword>
<keyword id="KW-0903">Direct protein sequencing</keyword>
<keyword id="KW-1015">Disulfide bond</keyword>
<keyword id="KW-0301">Gamma-carboxyglutamic acid</keyword>
<keyword id="KW-0313">Glucose metabolism</keyword>
<keyword id="KW-0372">Hormone</keyword>
<keyword id="KW-0379">Hydroxylation</keyword>
<keyword id="KW-0964">Secreted</keyword>
<keyword id="KW-0732">Signal</keyword>
<keyword id="KW-0800">Toxin</keyword>
<evidence type="ECO:0000250" key="1">
    <source>
        <dbReference type="UniProtKB" id="A0A0B5AC95"/>
    </source>
</evidence>
<evidence type="ECO:0000255" key="2"/>
<evidence type="ECO:0000269" key="3">
    <source>
    </source>
</evidence>
<evidence type="ECO:0000269" key="4">
    <source>
    </source>
</evidence>
<evidence type="ECO:0000303" key="5">
    <source>
    </source>
</evidence>
<evidence type="ECO:0000305" key="6"/>
<evidence type="ECO:0000305" key="7">
    <source>
    </source>
</evidence>
<evidence type="ECO:0000312" key="8">
    <source>
        <dbReference type="EMBL" id="AJD85820.1"/>
    </source>
</evidence>
<proteinExistence type="evidence at protein level"/>
<protein>
    <recommendedName>
        <fullName evidence="5">Con-Ins G3</fullName>
    </recommendedName>
    <alternativeName>
        <fullName evidence="8">Insulin 3</fullName>
    </alternativeName>
    <component>
        <recommendedName>
            <fullName evidence="5">Con-Ins G3 B chain</fullName>
        </recommendedName>
    </component>
    <component>
        <recommendedName>
            <fullName evidence="5">Con-Ins G3 A chain</fullName>
        </recommendedName>
    </component>
</protein>
<organism>
    <name type="scientific">Conus geographus</name>
    <name type="common">Geography cone</name>
    <name type="synonym">Nubecula geographus</name>
    <dbReference type="NCBI Taxonomy" id="6491"/>
    <lineage>
        <taxon>Eukaryota</taxon>
        <taxon>Metazoa</taxon>
        <taxon>Spiralia</taxon>
        <taxon>Lophotrochozoa</taxon>
        <taxon>Mollusca</taxon>
        <taxon>Gastropoda</taxon>
        <taxon>Caenogastropoda</taxon>
        <taxon>Neogastropoda</taxon>
        <taxon>Conoidea</taxon>
        <taxon>Conidae</taxon>
        <taxon>Conus</taxon>
        <taxon>Gastridium</taxon>
    </lineage>
</organism>